<sequence>MMLRTCKDVTMRGERVVVRVDFNVPMRDGMVQDDTRVTAAVPTLRYIIEQGPRHVVLISHLGDPTRDADKAEGNAKKDGCPFDRHAFINGKHRLKPVADCLAKKLGVPVHFAPSCVGQREFIEGLPDGSVVLLENVRFHPEETSGDAKVQEQFARELAQYGDIFVNDAFGTAHREHASTVVLPRLMRRRVAGLLIEREVRYLEPMVCNPKVPMVAVVGGAKVSSKIAVLESLLRTSTALIIGGGMAYTFLKAQGVGVGTSLVEDDFIDTARMLLQKAQSGGVSVVLPVDHVCASTFCADAQPVAVDDVHIPMHLMGMDVGPRTLEQYRAHLKGVSSVLWNGPVGVFEFDAFAHGTRVLAQLIAEATDAGATSVVGGGDSIAAVSKFGLASRMSHVSTGGGASLKLFEGKVLPGISCLET</sequence>
<reference key="1">
    <citation type="journal article" date="1998" name="Science">
        <title>Complete genome sequence of Treponema pallidum, the syphilis spirochete.</title>
        <authorList>
            <person name="Fraser C.M."/>
            <person name="Norris S.J."/>
            <person name="Weinstock G.M."/>
            <person name="White O."/>
            <person name="Sutton G.G."/>
            <person name="Dodson R.J."/>
            <person name="Gwinn M.L."/>
            <person name="Hickey E.K."/>
            <person name="Clayton R.A."/>
            <person name="Ketchum K.A."/>
            <person name="Sodergren E."/>
            <person name="Hardham J.M."/>
            <person name="McLeod M.P."/>
            <person name="Salzberg S.L."/>
            <person name="Peterson J.D."/>
            <person name="Khalak H.G."/>
            <person name="Richardson D.L."/>
            <person name="Howell J.K."/>
            <person name="Chidambaram M."/>
            <person name="Utterback T.R."/>
            <person name="McDonald L.A."/>
            <person name="Artiach P."/>
            <person name="Bowman C."/>
            <person name="Cotton M.D."/>
            <person name="Fujii C."/>
            <person name="Garland S.A."/>
            <person name="Hatch B."/>
            <person name="Horst K."/>
            <person name="Roberts K.M."/>
            <person name="Sandusky M."/>
            <person name="Weidman J.F."/>
            <person name="Smith H.O."/>
            <person name="Venter J.C."/>
        </authorList>
    </citation>
    <scope>NUCLEOTIDE SEQUENCE [LARGE SCALE GENOMIC DNA]</scope>
    <source>
        <strain>Nichols</strain>
    </source>
</reference>
<evidence type="ECO:0000250" key="1"/>
<evidence type="ECO:0000305" key="2"/>
<protein>
    <recommendedName>
        <fullName>Phosphoglycerate kinase</fullName>
        <ecNumber>2.7.2.3</ecNumber>
    </recommendedName>
</protein>
<comment type="catalytic activity">
    <reaction>
        <text>(2R)-3-phosphoglycerate + ATP = (2R)-3-phospho-glyceroyl phosphate + ADP</text>
        <dbReference type="Rhea" id="RHEA:14801"/>
        <dbReference type="ChEBI" id="CHEBI:30616"/>
        <dbReference type="ChEBI" id="CHEBI:57604"/>
        <dbReference type="ChEBI" id="CHEBI:58272"/>
        <dbReference type="ChEBI" id="CHEBI:456216"/>
        <dbReference type="EC" id="2.7.2.3"/>
    </reaction>
</comment>
<comment type="pathway">
    <text>Carbohydrate degradation; glycolysis; pyruvate from D-glyceraldehyde 3-phosphate: step 2/5.</text>
</comment>
<comment type="subunit">
    <text evidence="1">Monomer.</text>
</comment>
<comment type="subcellular location">
    <subcellularLocation>
        <location evidence="2">Cytoplasm</location>
    </subcellularLocation>
</comment>
<comment type="similarity">
    <text evidence="2">Belongs to the phosphoglycerate kinase family.</text>
</comment>
<gene>
    <name type="primary">pgk</name>
    <name type="ordered locus">TP_0538</name>
</gene>
<name>PGK_TREPA</name>
<keyword id="KW-0067">ATP-binding</keyword>
<keyword id="KW-0963">Cytoplasm</keyword>
<keyword id="KW-0324">Glycolysis</keyword>
<keyword id="KW-0418">Kinase</keyword>
<keyword id="KW-0547">Nucleotide-binding</keyword>
<keyword id="KW-1185">Reference proteome</keyword>
<keyword id="KW-0808">Transferase</keyword>
<proteinExistence type="inferred from homology"/>
<dbReference type="EC" id="2.7.2.3"/>
<dbReference type="EMBL" id="AE000520">
    <property type="protein sequence ID" value="AAC65523.1"/>
    <property type="molecule type" value="Genomic_DNA"/>
</dbReference>
<dbReference type="PIR" id="G71311">
    <property type="entry name" value="G71311"/>
</dbReference>
<dbReference type="SMR" id="O83549"/>
<dbReference type="IntAct" id="O83549">
    <property type="interactions" value="1"/>
</dbReference>
<dbReference type="STRING" id="243276.TP_0538"/>
<dbReference type="EnsemblBacteria" id="AAC65523">
    <property type="protein sequence ID" value="AAC65523"/>
    <property type="gene ID" value="TP_0538"/>
</dbReference>
<dbReference type="KEGG" id="tpa:TP_0538"/>
<dbReference type="KEGG" id="tpw:TPANIC_0538"/>
<dbReference type="eggNOG" id="COG0126">
    <property type="taxonomic scope" value="Bacteria"/>
</dbReference>
<dbReference type="HOGENOM" id="CLU_025427_0_2_12"/>
<dbReference type="OrthoDB" id="9808460at2"/>
<dbReference type="UniPathway" id="UPA00109">
    <property type="reaction ID" value="UER00185"/>
</dbReference>
<dbReference type="Proteomes" id="UP000000811">
    <property type="component" value="Chromosome"/>
</dbReference>
<dbReference type="GO" id="GO:0005829">
    <property type="term" value="C:cytosol"/>
    <property type="evidence" value="ECO:0007669"/>
    <property type="project" value="TreeGrafter"/>
</dbReference>
<dbReference type="GO" id="GO:0043531">
    <property type="term" value="F:ADP binding"/>
    <property type="evidence" value="ECO:0007669"/>
    <property type="project" value="TreeGrafter"/>
</dbReference>
<dbReference type="GO" id="GO:0005524">
    <property type="term" value="F:ATP binding"/>
    <property type="evidence" value="ECO:0007669"/>
    <property type="project" value="UniProtKB-KW"/>
</dbReference>
<dbReference type="GO" id="GO:0004618">
    <property type="term" value="F:phosphoglycerate kinase activity"/>
    <property type="evidence" value="ECO:0007669"/>
    <property type="project" value="UniProtKB-UniRule"/>
</dbReference>
<dbReference type="GO" id="GO:0006094">
    <property type="term" value="P:gluconeogenesis"/>
    <property type="evidence" value="ECO:0007669"/>
    <property type="project" value="TreeGrafter"/>
</dbReference>
<dbReference type="GO" id="GO:0006096">
    <property type="term" value="P:glycolytic process"/>
    <property type="evidence" value="ECO:0007669"/>
    <property type="project" value="UniProtKB-UniRule"/>
</dbReference>
<dbReference type="CDD" id="cd00318">
    <property type="entry name" value="Phosphoglycerate_kinase"/>
    <property type="match status" value="1"/>
</dbReference>
<dbReference type="FunFam" id="3.40.50.1260:FF:000007">
    <property type="entry name" value="Phosphoglycerate kinase"/>
    <property type="match status" value="1"/>
</dbReference>
<dbReference type="Gene3D" id="3.40.50.1260">
    <property type="entry name" value="Phosphoglycerate kinase, N-terminal domain"/>
    <property type="match status" value="2"/>
</dbReference>
<dbReference type="HAMAP" id="MF_00145">
    <property type="entry name" value="Phosphoglyc_kinase"/>
    <property type="match status" value="1"/>
</dbReference>
<dbReference type="InterPro" id="IPR001576">
    <property type="entry name" value="Phosphoglycerate_kinase"/>
</dbReference>
<dbReference type="InterPro" id="IPR015911">
    <property type="entry name" value="Phosphoglycerate_kinase_CS"/>
</dbReference>
<dbReference type="InterPro" id="IPR015824">
    <property type="entry name" value="Phosphoglycerate_kinase_N"/>
</dbReference>
<dbReference type="InterPro" id="IPR036043">
    <property type="entry name" value="Phosphoglycerate_kinase_sf"/>
</dbReference>
<dbReference type="PANTHER" id="PTHR11406">
    <property type="entry name" value="PHOSPHOGLYCERATE KINASE"/>
    <property type="match status" value="1"/>
</dbReference>
<dbReference type="PANTHER" id="PTHR11406:SF23">
    <property type="entry name" value="PHOSPHOGLYCERATE KINASE 1, CHLOROPLASTIC-RELATED"/>
    <property type="match status" value="1"/>
</dbReference>
<dbReference type="Pfam" id="PF00162">
    <property type="entry name" value="PGK"/>
    <property type="match status" value="1"/>
</dbReference>
<dbReference type="PIRSF" id="PIRSF000724">
    <property type="entry name" value="Pgk"/>
    <property type="match status" value="1"/>
</dbReference>
<dbReference type="PRINTS" id="PR00477">
    <property type="entry name" value="PHGLYCKINASE"/>
</dbReference>
<dbReference type="SUPFAM" id="SSF53748">
    <property type="entry name" value="Phosphoglycerate kinase"/>
    <property type="match status" value="1"/>
</dbReference>
<dbReference type="PROSITE" id="PS00111">
    <property type="entry name" value="PGLYCERATE_KINASE"/>
    <property type="match status" value="1"/>
</dbReference>
<organism>
    <name type="scientific">Treponema pallidum (strain Nichols)</name>
    <dbReference type="NCBI Taxonomy" id="243276"/>
    <lineage>
        <taxon>Bacteria</taxon>
        <taxon>Pseudomonadati</taxon>
        <taxon>Spirochaetota</taxon>
        <taxon>Spirochaetia</taxon>
        <taxon>Spirochaetales</taxon>
        <taxon>Treponemataceae</taxon>
        <taxon>Treponema</taxon>
    </lineage>
</organism>
<feature type="chain" id="PRO_0000146030" description="Phosphoglycerate kinase">
    <location>
        <begin position="1"/>
        <end position="419"/>
    </location>
</feature>
<feature type="binding site" evidence="1">
    <location>
        <begin position="21"/>
        <end position="23"/>
    </location>
    <ligand>
        <name>substrate</name>
    </ligand>
</feature>
<feature type="binding site" evidence="1">
    <location>
        <position position="36"/>
    </location>
    <ligand>
        <name>substrate</name>
    </ligand>
</feature>
<feature type="binding site" evidence="1">
    <location>
        <begin position="60"/>
        <end position="63"/>
    </location>
    <ligand>
        <name>substrate</name>
    </ligand>
</feature>
<feature type="binding site" evidence="1">
    <location>
        <position position="137"/>
    </location>
    <ligand>
        <name>substrate</name>
    </ligand>
</feature>
<feature type="binding site" evidence="1">
    <location>
        <position position="174"/>
    </location>
    <ligand>
        <name>substrate</name>
    </ligand>
</feature>
<feature type="binding site" evidence="1">
    <location>
        <position position="225"/>
    </location>
    <ligand>
        <name>ATP</name>
        <dbReference type="ChEBI" id="CHEBI:30616"/>
    </ligand>
</feature>
<feature type="binding site" evidence="1">
    <location>
        <position position="316"/>
    </location>
    <ligand>
        <name>ATP</name>
        <dbReference type="ChEBI" id="CHEBI:30616"/>
    </ligand>
</feature>
<feature type="binding site" evidence="1">
    <location>
        <position position="347"/>
    </location>
    <ligand>
        <name>ATP</name>
        <dbReference type="ChEBI" id="CHEBI:30616"/>
    </ligand>
</feature>
<feature type="binding site" evidence="1">
    <location>
        <begin position="376"/>
        <end position="379"/>
    </location>
    <ligand>
        <name>ATP</name>
        <dbReference type="ChEBI" id="CHEBI:30616"/>
    </ligand>
</feature>
<accession>O83549</accession>